<accession>Q2RQ44</accession>
<reference key="1">
    <citation type="journal article" date="2011" name="Stand. Genomic Sci.">
        <title>Complete genome sequence of Rhodospirillum rubrum type strain (S1).</title>
        <authorList>
            <person name="Munk A.C."/>
            <person name="Copeland A."/>
            <person name="Lucas S."/>
            <person name="Lapidus A."/>
            <person name="Del Rio T.G."/>
            <person name="Barry K."/>
            <person name="Detter J.C."/>
            <person name="Hammon N."/>
            <person name="Israni S."/>
            <person name="Pitluck S."/>
            <person name="Brettin T."/>
            <person name="Bruce D."/>
            <person name="Han C."/>
            <person name="Tapia R."/>
            <person name="Gilna P."/>
            <person name="Schmutz J."/>
            <person name="Larimer F."/>
            <person name="Land M."/>
            <person name="Kyrpides N.C."/>
            <person name="Mavromatis K."/>
            <person name="Richardson P."/>
            <person name="Rohde M."/>
            <person name="Goeker M."/>
            <person name="Klenk H.P."/>
            <person name="Zhang Y."/>
            <person name="Roberts G.P."/>
            <person name="Reslewic S."/>
            <person name="Schwartz D.C."/>
        </authorList>
    </citation>
    <scope>NUCLEOTIDE SEQUENCE [LARGE SCALE GENOMIC DNA]</scope>
    <source>
        <strain>ATCC 11170 / ATH 1.1.1 / DSM 467 / LMG 4362 / NCIMB 8255 / S1</strain>
    </source>
</reference>
<sequence>MAETPSFQSLILRLQQFWAAQGCVLLQPYDMEVGAGTFHPATTLRALGPEPWKAAYVQPSRRPTDGRYGENPNRLQHYYQFQVILKPSPADPQALYLDSLRALGIDPLKHDIRFVEDDWESPTLGAWGLGWEVWCDGMEVTQFTYFQQVGGFDCDPVPVEMTYGLERLAMYIQGVENVYDLDYNGAGVRYGDIFLQGEKEFSAHNFEYANTEALFRHFKDAEEECMALLAKGVPLPAYDQCIKASHRFNLLDARGVISVTERAAYIGRVRALAKGCCEGWLRARGHLPPLTGTEG</sequence>
<evidence type="ECO:0000255" key="1">
    <source>
        <dbReference type="HAMAP-Rule" id="MF_00254"/>
    </source>
</evidence>
<organism>
    <name type="scientific">Rhodospirillum rubrum (strain ATCC 11170 / ATH 1.1.1 / DSM 467 / LMG 4362 / NCIMB 8255 / S1)</name>
    <dbReference type="NCBI Taxonomy" id="269796"/>
    <lineage>
        <taxon>Bacteria</taxon>
        <taxon>Pseudomonadati</taxon>
        <taxon>Pseudomonadota</taxon>
        <taxon>Alphaproteobacteria</taxon>
        <taxon>Rhodospirillales</taxon>
        <taxon>Rhodospirillaceae</taxon>
        <taxon>Rhodospirillum</taxon>
    </lineage>
</organism>
<proteinExistence type="inferred from homology"/>
<feature type="chain" id="PRO_1000047478" description="Glycine--tRNA ligase alpha subunit">
    <location>
        <begin position="1"/>
        <end position="295"/>
    </location>
</feature>
<protein>
    <recommendedName>
        <fullName evidence="1">Glycine--tRNA ligase alpha subunit</fullName>
        <ecNumber evidence="1">6.1.1.14</ecNumber>
    </recommendedName>
    <alternativeName>
        <fullName evidence="1">Glycyl-tRNA synthetase alpha subunit</fullName>
        <shortName evidence="1">GlyRS</shortName>
    </alternativeName>
</protein>
<keyword id="KW-0030">Aminoacyl-tRNA synthetase</keyword>
<keyword id="KW-0067">ATP-binding</keyword>
<keyword id="KW-0963">Cytoplasm</keyword>
<keyword id="KW-0436">Ligase</keyword>
<keyword id="KW-0547">Nucleotide-binding</keyword>
<keyword id="KW-0648">Protein biosynthesis</keyword>
<keyword id="KW-1185">Reference proteome</keyword>
<gene>
    <name evidence="1" type="primary">glyQ</name>
    <name type="ordered locus">Rru_A2954</name>
</gene>
<name>SYGA_RHORT</name>
<dbReference type="EC" id="6.1.1.14" evidence="1"/>
<dbReference type="EMBL" id="CP000230">
    <property type="protein sequence ID" value="ABC23751.1"/>
    <property type="molecule type" value="Genomic_DNA"/>
</dbReference>
<dbReference type="RefSeq" id="WP_011390704.1">
    <property type="nucleotide sequence ID" value="NC_007643.1"/>
</dbReference>
<dbReference type="RefSeq" id="YP_428038.1">
    <property type="nucleotide sequence ID" value="NC_007643.1"/>
</dbReference>
<dbReference type="SMR" id="Q2RQ44"/>
<dbReference type="STRING" id="269796.Rru_A2954"/>
<dbReference type="EnsemblBacteria" id="ABC23751">
    <property type="protein sequence ID" value="ABC23751"/>
    <property type="gene ID" value="Rru_A2954"/>
</dbReference>
<dbReference type="KEGG" id="rru:Rru_A2954"/>
<dbReference type="PATRIC" id="fig|269796.9.peg.3064"/>
<dbReference type="eggNOG" id="COG0752">
    <property type="taxonomic scope" value="Bacteria"/>
</dbReference>
<dbReference type="HOGENOM" id="CLU_057066_1_0_5"/>
<dbReference type="PhylomeDB" id="Q2RQ44"/>
<dbReference type="Proteomes" id="UP000001929">
    <property type="component" value="Chromosome"/>
</dbReference>
<dbReference type="GO" id="GO:0005829">
    <property type="term" value="C:cytosol"/>
    <property type="evidence" value="ECO:0007669"/>
    <property type="project" value="TreeGrafter"/>
</dbReference>
<dbReference type="GO" id="GO:0005524">
    <property type="term" value="F:ATP binding"/>
    <property type="evidence" value="ECO:0007669"/>
    <property type="project" value="UniProtKB-UniRule"/>
</dbReference>
<dbReference type="GO" id="GO:0004820">
    <property type="term" value="F:glycine-tRNA ligase activity"/>
    <property type="evidence" value="ECO:0007669"/>
    <property type="project" value="UniProtKB-UniRule"/>
</dbReference>
<dbReference type="GO" id="GO:0006426">
    <property type="term" value="P:glycyl-tRNA aminoacylation"/>
    <property type="evidence" value="ECO:0007669"/>
    <property type="project" value="UniProtKB-UniRule"/>
</dbReference>
<dbReference type="CDD" id="cd00733">
    <property type="entry name" value="GlyRS_alpha_core"/>
    <property type="match status" value="1"/>
</dbReference>
<dbReference type="FunFam" id="3.30.930.10:FF:000006">
    <property type="entry name" value="Glycine--tRNA ligase alpha subunit"/>
    <property type="match status" value="1"/>
</dbReference>
<dbReference type="Gene3D" id="3.30.930.10">
    <property type="entry name" value="Bira Bifunctional Protein, Domain 2"/>
    <property type="match status" value="1"/>
</dbReference>
<dbReference type="Gene3D" id="1.20.58.180">
    <property type="entry name" value="Class II aaRS and biotin synthetases, domain 2"/>
    <property type="match status" value="1"/>
</dbReference>
<dbReference type="HAMAP" id="MF_00254">
    <property type="entry name" value="Gly_tRNA_synth_alpha"/>
    <property type="match status" value="1"/>
</dbReference>
<dbReference type="InterPro" id="IPR045864">
    <property type="entry name" value="aa-tRNA-synth_II/BPL/LPL"/>
</dbReference>
<dbReference type="InterPro" id="IPR006194">
    <property type="entry name" value="Gly-tRNA-synth_heterodimer"/>
</dbReference>
<dbReference type="InterPro" id="IPR002310">
    <property type="entry name" value="Gly-tRNA_ligase_asu"/>
</dbReference>
<dbReference type="NCBIfam" id="TIGR00388">
    <property type="entry name" value="glyQ"/>
    <property type="match status" value="1"/>
</dbReference>
<dbReference type="NCBIfam" id="NF006827">
    <property type="entry name" value="PRK09348.1"/>
    <property type="match status" value="1"/>
</dbReference>
<dbReference type="PANTHER" id="PTHR30075:SF2">
    <property type="entry name" value="GLYCINE--TRNA LIGASE, CHLOROPLASTIC_MITOCHONDRIAL 2"/>
    <property type="match status" value="1"/>
</dbReference>
<dbReference type="PANTHER" id="PTHR30075">
    <property type="entry name" value="GLYCYL-TRNA SYNTHETASE"/>
    <property type="match status" value="1"/>
</dbReference>
<dbReference type="Pfam" id="PF02091">
    <property type="entry name" value="tRNA-synt_2e"/>
    <property type="match status" value="1"/>
</dbReference>
<dbReference type="PRINTS" id="PR01044">
    <property type="entry name" value="TRNASYNTHGA"/>
</dbReference>
<dbReference type="SUPFAM" id="SSF55681">
    <property type="entry name" value="Class II aaRS and biotin synthetases"/>
    <property type="match status" value="1"/>
</dbReference>
<dbReference type="PROSITE" id="PS50861">
    <property type="entry name" value="AA_TRNA_LIGASE_II_GLYAB"/>
    <property type="match status" value="1"/>
</dbReference>
<comment type="catalytic activity">
    <reaction evidence="1">
        <text>tRNA(Gly) + glycine + ATP = glycyl-tRNA(Gly) + AMP + diphosphate</text>
        <dbReference type="Rhea" id="RHEA:16013"/>
        <dbReference type="Rhea" id="RHEA-COMP:9664"/>
        <dbReference type="Rhea" id="RHEA-COMP:9683"/>
        <dbReference type="ChEBI" id="CHEBI:30616"/>
        <dbReference type="ChEBI" id="CHEBI:33019"/>
        <dbReference type="ChEBI" id="CHEBI:57305"/>
        <dbReference type="ChEBI" id="CHEBI:78442"/>
        <dbReference type="ChEBI" id="CHEBI:78522"/>
        <dbReference type="ChEBI" id="CHEBI:456215"/>
        <dbReference type="EC" id="6.1.1.14"/>
    </reaction>
</comment>
<comment type="subunit">
    <text evidence="1">Tetramer of two alpha and two beta subunits.</text>
</comment>
<comment type="subcellular location">
    <subcellularLocation>
        <location evidence="1">Cytoplasm</location>
    </subcellularLocation>
</comment>
<comment type="similarity">
    <text evidence="1">Belongs to the class-II aminoacyl-tRNA synthetase family.</text>
</comment>